<gene>
    <name evidence="1" type="primary">hdfR</name>
    <name type="ordered locus">SFV_3737</name>
</gene>
<comment type="function">
    <text evidence="1">Negatively regulates the transcription of the flagellar master operon flhDC by binding to the upstream region of the operon.</text>
</comment>
<comment type="similarity">
    <text evidence="2">Belongs to the LysR transcriptional regulatory family.</text>
</comment>
<keyword id="KW-0238">DNA-binding</keyword>
<keyword id="KW-0678">Repressor</keyword>
<keyword id="KW-0804">Transcription</keyword>
<keyword id="KW-0805">Transcription regulation</keyword>
<sequence>MDTELLKTFLEVSRTRHFGRAAESLYLTQSAVSFRIRQLENQLGVNLFTRHRNNIRLTAAGEKLLPYAETLMSTWQAARKEVAHTSRHNEFSIGASASLWECMLNQWLGRLYQNQDAHTGLQFEARIAQRQSLVKQLHERQLDLLITTEAPKMDEFSSQLLGYFTLALYTSAPSKLKGDLNYLRLEWGPDFQQHEAGLIGADEVPILTTSSAELAQQQIAMLNGCTWLPVSWARKKGGLHTVVDSTTLSRPLYAIWLQNSDKNALIRDLLKINVLDEVY</sequence>
<proteinExistence type="inferred from homology"/>
<dbReference type="EMBL" id="CP000266">
    <property type="protein sequence ID" value="ABF05758.1"/>
    <property type="molecule type" value="Genomic_DNA"/>
</dbReference>
<dbReference type="RefSeq" id="WP_000379245.1">
    <property type="nucleotide sequence ID" value="NC_008258.1"/>
</dbReference>
<dbReference type="SMR" id="Q0SYV7"/>
<dbReference type="GeneID" id="93778187"/>
<dbReference type="KEGG" id="sfv:SFV_3737"/>
<dbReference type="HOGENOM" id="CLU_039613_8_2_6"/>
<dbReference type="Proteomes" id="UP000000659">
    <property type="component" value="Chromosome"/>
</dbReference>
<dbReference type="GO" id="GO:0003677">
    <property type="term" value="F:DNA binding"/>
    <property type="evidence" value="ECO:0007669"/>
    <property type="project" value="UniProtKB-KW"/>
</dbReference>
<dbReference type="GO" id="GO:0003700">
    <property type="term" value="F:DNA-binding transcription factor activity"/>
    <property type="evidence" value="ECO:0007669"/>
    <property type="project" value="UniProtKB-UniRule"/>
</dbReference>
<dbReference type="GO" id="GO:0045892">
    <property type="term" value="P:negative regulation of DNA-templated transcription"/>
    <property type="evidence" value="ECO:0007669"/>
    <property type="project" value="UniProtKB-UniRule"/>
</dbReference>
<dbReference type="FunFam" id="1.10.10.10:FF:000001">
    <property type="entry name" value="LysR family transcriptional regulator"/>
    <property type="match status" value="1"/>
</dbReference>
<dbReference type="Gene3D" id="3.40.190.10">
    <property type="entry name" value="Periplasmic binding protein-like II"/>
    <property type="match status" value="2"/>
</dbReference>
<dbReference type="Gene3D" id="1.10.10.10">
    <property type="entry name" value="Winged helix-like DNA-binding domain superfamily/Winged helix DNA-binding domain"/>
    <property type="match status" value="1"/>
</dbReference>
<dbReference type="HAMAP" id="MF_01233">
    <property type="entry name" value="HTH_type_HdfR"/>
    <property type="match status" value="1"/>
</dbReference>
<dbReference type="InterPro" id="IPR050176">
    <property type="entry name" value="LTTR"/>
</dbReference>
<dbReference type="InterPro" id="IPR005119">
    <property type="entry name" value="LysR_subst-bd"/>
</dbReference>
<dbReference type="InterPro" id="IPR020890">
    <property type="entry name" value="Tscrpt_reg_HTH_HdfR"/>
</dbReference>
<dbReference type="InterPro" id="IPR000847">
    <property type="entry name" value="Tscrpt_reg_HTH_LysR"/>
</dbReference>
<dbReference type="InterPro" id="IPR036388">
    <property type="entry name" value="WH-like_DNA-bd_sf"/>
</dbReference>
<dbReference type="InterPro" id="IPR036390">
    <property type="entry name" value="WH_DNA-bd_sf"/>
</dbReference>
<dbReference type="NCBIfam" id="NF002946">
    <property type="entry name" value="PRK03601.1"/>
    <property type="match status" value="1"/>
</dbReference>
<dbReference type="PANTHER" id="PTHR30579:SF8">
    <property type="entry name" value="HTH-TYPE TRANSCRIPTIONAL REGULATOR HDFR"/>
    <property type="match status" value="1"/>
</dbReference>
<dbReference type="PANTHER" id="PTHR30579">
    <property type="entry name" value="TRANSCRIPTIONAL REGULATOR"/>
    <property type="match status" value="1"/>
</dbReference>
<dbReference type="Pfam" id="PF00126">
    <property type="entry name" value="HTH_1"/>
    <property type="match status" value="1"/>
</dbReference>
<dbReference type="Pfam" id="PF03466">
    <property type="entry name" value="LysR_substrate"/>
    <property type="match status" value="1"/>
</dbReference>
<dbReference type="PRINTS" id="PR00039">
    <property type="entry name" value="HTHLYSR"/>
</dbReference>
<dbReference type="SUPFAM" id="SSF53850">
    <property type="entry name" value="Periplasmic binding protein-like II"/>
    <property type="match status" value="1"/>
</dbReference>
<dbReference type="SUPFAM" id="SSF46785">
    <property type="entry name" value="Winged helix' DNA-binding domain"/>
    <property type="match status" value="1"/>
</dbReference>
<dbReference type="PROSITE" id="PS50931">
    <property type="entry name" value="HTH_LYSR"/>
    <property type="match status" value="1"/>
</dbReference>
<name>HDFR_SHIF8</name>
<protein>
    <recommendedName>
        <fullName evidence="1">HTH-type transcriptional regulator HdfR</fullName>
    </recommendedName>
    <alternativeName>
        <fullName evidence="1">H-NS-dependent flhDC regulator</fullName>
    </alternativeName>
</protein>
<evidence type="ECO:0000255" key="1">
    <source>
        <dbReference type="HAMAP-Rule" id="MF_01233"/>
    </source>
</evidence>
<evidence type="ECO:0000305" key="2"/>
<accession>Q0SYV7</accession>
<reference key="1">
    <citation type="journal article" date="2006" name="BMC Genomics">
        <title>Complete genome sequence of Shigella flexneri 5b and comparison with Shigella flexneri 2a.</title>
        <authorList>
            <person name="Nie H."/>
            <person name="Yang F."/>
            <person name="Zhang X."/>
            <person name="Yang J."/>
            <person name="Chen L."/>
            <person name="Wang J."/>
            <person name="Xiong Z."/>
            <person name="Peng J."/>
            <person name="Sun L."/>
            <person name="Dong J."/>
            <person name="Xue Y."/>
            <person name="Xu X."/>
            <person name="Chen S."/>
            <person name="Yao Z."/>
            <person name="Shen Y."/>
            <person name="Jin Q."/>
        </authorList>
    </citation>
    <scope>NUCLEOTIDE SEQUENCE [LARGE SCALE GENOMIC DNA]</scope>
    <source>
        <strain>8401</strain>
    </source>
</reference>
<feature type="chain" id="PRO_1000066899" description="HTH-type transcriptional regulator HdfR">
    <location>
        <begin position="1"/>
        <end position="279"/>
    </location>
</feature>
<feature type="domain" description="HTH lysR-type" evidence="1">
    <location>
        <begin position="1"/>
        <end position="58"/>
    </location>
</feature>
<feature type="DNA-binding region" description="H-T-H motif" evidence="1">
    <location>
        <begin position="18"/>
        <end position="37"/>
    </location>
</feature>
<organism>
    <name type="scientific">Shigella flexneri serotype 5b (strain 8401)</name>
    <dbReference type="NCBI Taxonomy" id="373384"/>
    <lineage>
        <taxon>Bacteria</taxon>
        <taxon>Pseudomonadati</taxon>
        <taxon>Pseudomonadota</taxon>
        <taxon>Gammaproteobacteria</taxon>
        <taxon>Enterobacterales</taxon>
        <taxon>Enterobacteriaceae</taxon>
        <taxon>Shigella</taxon>
    </lineage>
</organism>